<dbReference type="EMBL" id="CP000425">
    <property type="protein sequence ID" value="ABJ73946.1"/>
    <property type="molecule type" value="Genomic_DNA"/>
</dbReference>
<dbReference type="RefSeq" id="WP_011677255.1">
    <property type="nucleotide sequence ID" value="NC_008527.1"/>
</dbReference>
<dbReference type="SMR" id="Q02VS6"/>
<dbReference type="KEGG" id="llc:LACR_2516"/>
<dbReference type="HOGENOM" id="CLU_087936_1_0_9"/>
<dbReference type="Proteomes" id="UP000000240">
    <property type="component" value="Chromosome"/>
</dbReference>
<dbReference type="GO" id="GO:0005737">
    <property type="term" value="C:cytoplasm"/>
    <property type="evidence" value="ECO:0007669"/>
    <property type="project" value="UniProtKB-SubCell"/>
</dbReference>
<dbReference type="GO" id="GO:0009379">
    <property type="term" value="C:Holliday junction helicase complex"/>
    <property type="evidence" value="ECO:0007669"/>
    <property type="project" value="InterPro"/>
</dbReference>
<dbReference type="GO" id="GO:0048476">
    <property type="term" value="C:Holliday junction resolvase complex"/>
    <property type="evidence" value="ECO:0007669"/>
    <property type="project" value="UniProtKB-UniRule"/>
</dbReference>
<dbReference type="GO" id="GO:0005524">
    <property type="term" value="F:ATP binding"/>
    <property type="evidence" value="ECO:0007669"/>
    <property type="project" value="InterPro"/>
</dbReference>
<dbReference type="GO" id="GO:0000400">
    <property type="term" value="F:four-way junction DNA binding"/>
    <property type="evidence" value="ECO:0007669"/>
    <property type="project" value="UniProtKB-UniRule"/>
</dbReference>
<dbReference type="GO" id="GO:0009378">
    <property type="term" value="F:four-way junction helicase activity"/>
    <property type="evidence" value="ECO:0007669"/>
    <property type="project" value="InterPro"/>
</dbReference>
<dbReference type="GO" id="GO:0006310">
    <property type="term" value="P:DNA recombination"/>
    <property type="evidence" value="ECO:0007669"/>
    <property type="project" value="UniProtKB-UniRule"/>
</dbReference>
<dbReference type="GO" id="GO:0006281">
    <property type="term" value="P:DNA repair"/>
    <property type="evidence" value="ECO:0007669"/>
    <property type="project" value="UniProtKB-UniRule"/>
</dbReference>
<dbReference type="CDD" id="cd14332">
    <property type="entry name" value="UBA_RuvA_C"/>
    <property type="match status" value="1"/>
</dbReference>
<dbReference type="Gene3D" id="1.10.150.20">
    <property type="entry name" value="5' to 3' exonuclease, C-terminal subdomain"/>
    <property type="match status" value="1"/>
</dbReference>
<dbReference type="Gene3D" id="1.10.8.10">
    <property type="entry name" value="DNA helicase RuvA subunit, C-terminal domain"/>
    <property type="match status" value="1"/>
</dbReference>
<dbReference type="Gene3D" id="2.40.50.140">
    <property type="entry name" value="Nucleic acid-binding proteins"/>
    <property type="match status" value="1"/>
</dbReference>
<dbReference type="HAMAP" id="MF_00031">
    <property type="entry name" value="DNA_HJ_migration_RuvA"/>
    <property type="match status" value="1"/>
</dbReference>
<dbReference type="InterPro" id="IPR013849">
    <property type="entry name" value="DNA_helicase_Holl-junc_RuvA_I"/>
</dbReference>
<dbReference type="InterPro" id="IPR003583">
    <property type="entry name" value="Hlx-hairpin-Hlx_DNA-bd_motif"/>
</dbReference>
<dbReference type="InterPro" id="IPR012340">
    <property type="entry name" value="NA-bd_OB-fold"/>
</dbReference>
<dbReference type="InterPro" id="IPR000085">
    <property type="entry name" value="RuvA"/>
</dbReference>
<dbReference type="InterPro" id="IPR010994">
    <property type="entry name" value="RuvA_2-like"/>
</dbReference>
<dbReference type="InterPro" id="IPR011114">
    <property type="entry name" value="RuvA_C"/>
</dbReference>
<dbReference type="InterPro" id="IPR036267">
    <property type="entry name" value="RuvA_C_sf"/>
</dbReference>
<dbReference type="NCBIfam" id="TIGR00084">
    <property type="entry name" value="ruvA"/>
    <property type="match status" value="1"/>
</dbReference>
<dbReference type="Pfam" id="PF14520">
    <property type="entry name" value="HHH_5"/>
    <property type="match status" value="1"/>
</dbReference>
<dbReference type="Pfam" id="PF07499">
    <property type="entry name" value="RuvA_C"/>
    <property type="match status" value="1"/>
</dbReference>
<dbReference type="Pfam" id="PF01330">
    <property type="entry name" value="RuvA_N"/>
    <property type="match status" value="1"/>
</dbReference>
<dbReference type="SMART" id="SM00278">
    <property type="entry name" value="HhH1"/>
    <property type="match status" value="2"/>
</dbReference>
<dbReference type="SUPFAM" id="SSF46929">
    <property type="entry name" value="DNA helicase RuvA subunit, C-terminal domain"/>
    <property type="match status" value="1"/>
</dbReference>
<dbReference type="SUPFAM" id="SSF50249">
    <property type="entry name" value="Nucleic acid-binding proteins"/>
    <property type="match status" value="1"/>
</dbReference>
<dbReference type="SUPFAM" id="SSF47781">
    <property type="entry name" value="RuvA domain 2-like"/>
    <property type="match status" value="1"/>
</dbReference>
<keyword id="KW-0963">Cytoplasm</keyword>
<keyword id="KW-0227">DNA damage</keyword>
<keyword id="KW-0233">DNA recombination</keyword>
<keyword id="KW-0234">DNA repair</keyword>
<keyword id="KW-0238">DNA-binding</keyword>
<protein>
    <recommendedName>
        <fullName evidence="1">Holliday junction branch migration complex subunit RuvA</fullName>
    </recommendedName>
</protein>
<gene>
    <name evidence="1" type="primary">ruvA</name>
    <name type="ordered locus">LACR_2516</name>
</gene>
<feature type="chain" id="PRO_1000002473" description="Holliday junction branch migration complex subunit RuvA">
    <location>
        <begin position="1"/>
        <end position="197"/>
    </location>
</feature>
<feature type="region of interest" description="Domain I" evidence="1">
    <location>
        <begin position="1"/>
        <end position="63"/>
    </location>
</feature>
<feature type="region of interest" description="Domain II" evidence="1">
    <location>
        <begin position="64"/>
        <end position="142"/>
    </location>
</feature>
<feature type="region of interest" description="Flexible linker" evidence="1">
    <location>
        <begin position="142"/>
        <end position="146"/>
    </location>
</feature>
<feature type="region of interest" description="Domain III" evidence="1">
    <location>
        <begin position="147"/>
        <end position="197"/>
    </location>
</feature>
<sequence>MFEYLNGKLVKISPTNIVIDLSGIGYLISVANPYAWSALMNTEVKIYVHQVIREDAHSLYGFVNESEKALFLRLISVSGIGPKSALAIIAAADNEGLINAIDNSDIKYLTKFPGVGKKTAMQMVLDLAGKFDATGAVGISLLDAAPAGNLALEEAIEALQALGYKATELKKIEKKLEQEAGLTSEEYIKSALKLMMK</sequence>
<proteinExistence type="inferred from homology"/>
<reference key="1">
    <citation type="journal article" date="2006" name="Proc. Natl. Acad. Sci. U.S.A.">
        <title>Comparative genomics of the lactic acid bacteria.</title>
        <authorList>
            <person name="Makarova K.S."/>
            <person name="Slesarev A."/>
            <person name="Wolf Y.I."/>
            <person name="Sorokin A."/>
            <person name="Mirkin B."/>
            <person name="Koonin E.V."/>
            <person name="Pavlov A."/>
            <person name="Pavlova N."/>
            <person name="Karamychev V."/>
            <person name="Polouchine N."/>
            <person name="Shakhova V."/>
            <person name="Grigoriev I."/>
            <person name="Lou Y."/>
            <person name="Rohksar D."/>
            <person name="Lucas S."/>
            <person name="Huang K."/>
            <person name="Goodstein D.M."/>
            <person name="Hawkins T."/>
            <person name="Plengvidhya V."/>
            <person name="Welker D."/>
            <person name="Hughes J."/>
            <person name="Goh Y."/>
            <person name="Benson A."/>
            <person name="Baldwin K."/>
            <person name="Lee J.-H."/>
            <person name="Diaz-Muniz I."/>
            <person name="Dosti B."/>
            <person name="Smeianov V."/>
            <person name="Wechter W."/>
            <person name="Barabote R."/>
            <person name="Lorca G."/>
            <person name="Altermann E."/>
            <person name="Barrangou R."/>
            <person name="Ganesan B."/>
            <person name="Xie Y."/>
            <person name="Rawsthorne H."/>
            <person name="Tamir D."/>
            <person name="Parker C."/>
            <person name="Breidt F."/>
            <person name="Broadbent J.R."/>
            <person name="Hutkins R."/>
            <person name="O'Sullivan D."/>
            <person name="Steele J."/>
            <person name="Unlu G."/>
            <person name="Saier M.H. Jr."/>
            <person name="Klaenhammer T."/>
            <person name="Richardson P."/>
            <person name="Kozyavkin S."/>
            <person name="Weimer B.C."/>
            <person name="Mills D.A."/>
        </authorList>
    </citation>
    <scope>NUCLEOTIDE SEQUENCE [LARGE SCALE GENOMIC DNA]</scope>
    <source>
        <strain>SK11</strain>
    </source>
</reference>
<evidence type="ECO:0000255" key="1">
    <source>
        <dbReference type="HAMAP-Rule" id="MF_00031"/>
    </source>
</evidence>
<comment type="function">
    <text evidence="1">The RuvA-RuvB-RuvC complex processes Holliday junction (HJ) DNA during genetic recombination and DNA repair, while the RuvA-RuvB complex plays an important role in the rescue of blocked DNA replication forks via replication fork reversal (RFR). RuvA specifically binds to HJ cruciform DNA, conferring on it an open structure. The RuvB hexamer acts as an ATP-dependent pump, pulling dsDNA into and through the RuvAB complex. HJ branch migration allows RuvC to scan DNA until it finds its consensus sequence, where it cleaves and resolves the cruciform DNA.</text>
</comment>
<comment type="subunit">
    <text evidence="1">Homotetramer. Forms an RuvA(8)-RuvB(12)-Holliday junction (HJ) complex. HJ DNA is sandwiched between 2 RuvA tetramers; dsDNA enters through RuvA and exits via RuvB. An RuvB hexamer assembles on each DNA strand where it exits the tetramer. Each RuvB hexamer is contacted by two RuvA subunits (via domain III) on 2 adjacent RuvB subunits; this complex drives branch migration. In the full resolvosome a probable DNA-RuvA(4)-RuvB(12)-RuvC(2) complex forms which resolves the HJ.</text>
</comment>
<comment type="subcellular location">
    <subcellularLocation>
        <location evidence="1">Cytoplasm</location>
    </subcellularLocation>
</comment>
<comment type="domain">
    <text evidence="1">Has three domains with a flexible linker between the domains II and III and assumes an 'L' shape. Domain III is highly mobile and contacts RuvB.</text>
</comment>
<comment type="similarity">
    <text evidence="1">Belongs to the RuvA family.</text>
</comment>
<name>RUVA_LACLS</name>
<organism>
    <name type="scientific">Lactococcus lactis subsp. cremoris (strain SK11)</name>
    <dbReference type="NCBI Taxonomy" id="272622"/>
    <lineage>
        <taxon>Bacteria</taxon>
        <taxon>Bacillati</taxon>
        <taxon>Bacillota</taxon>
        <taxon>Bacilli</taxon>
        <taxon>Lactobacillales</taxon>
        <taxon>Streptococcaceae</taxon>
        <taxon>Lactococcus</taxon>
        <taxon>Lactococcus cremoris subsp. cremoris</taxon>
    </lineage>
</organism>
<accession>Q02VS6</accession>